<sequence length="416" mass="47591">MMPQLQFKDAFWCRDFTAHTGYEVLLQRLLDGRKMCKDMEELLRQRAQAEERYGKELVQIARKAGGQTEINSLRASFDSLKQQMENVGSSHIQLALTLREELRSLEEFRERQKEQRKKYEAVMDRVQKSKLSLYKKAMESKKTYEQKCRDADDAEQAFERISANGHQKQVEKSQNKARQCKDSATEAERVYRQSIAQLEKVRAEWEQEHRTTCEAFQLQEFDRLTILRNALWVHSNQLSMQCVKDDELYEEVRLTLEGCSIDADIDSFIQAKSTGTEPPAPVPYQNYYDREVTPLTSSPGIQPSCGMIKRFSGLLHGSPKTTSLAASAASTETLTPTPERNEGVYTAIAVQEIQGNPASPAQEYRALYDYTAQNPDELDLSAGDILEVILEGEDGWWTVERNGQRGFVPGSYLEKL</sequence>
<evidence type="ECO:0000250" key="1"/>
<evidence type="ECO:0000250" key="2">
    <source>
        <dbReference type="UniProtKB" id="P97814"/>
    </source>
</evidence>
<evidence type="ECO:0000255" key="3"/>
<evidence type="ECO:0000255" key="4">
    <source>
        <dbReference type="PROSITE-ProRule" id="PRU00192"/>
    </source>
</evidence>
<evidence type="ECO:0000255" key="5">
    <source>
        <dbReference type="PROSITE-ProRule" id="PRU01077"/>
    </source>
</evidence>
<evidence type="ECO:0000269" key="6">
    <source>
    </source>
</evidence>
<evidence type="ECO:0000269" key="7">
    <source>
    </source>
</evidence>
<evidence type="ECO:0000269" key="8">
    <source>
    </source>
</evidence>
<evidence type="ECO:0000269" key="9">
    <source>
    </source>
</evidence>
<evidence type="ECO:0000269" key="10">
    <source>
    </source>
</evidence>
<evidence type="ECO:0000269" key="11">
    <source>
    </source>
</evidence>
<evidence type="ECO:0000269" key="12">
    <source>
    </source>
</evidence>
<evidence type="ECO:0000269" key="13">
    <source>
    </source>
</evidence>
<evidence type="ECO:0000269" key="14">
    <source>
    </source>
</evidence>
<evidence type="ECO:0000269" key="15">
    <source>
    </source>
</evidence>
<evidence type="ECO:0000269" key="16">
    <source>
    </source>
</evidence>
<evidence type="ECO:0000269" key="17">
    <source>
    </source>
</evidence>
<evidence type="ECO:0000269" key="18">
    <source>
    </source>
</evidence>
<evidence type="ECO:0000269" key="19">
    <source>
    </source>
</evidence>
<evidence type="ECO:0000269" key="20">
    <source>
    </source>
</evidence>
<evidence type="ECO:0000269" key="21">
    <source>
    </source>
</evidence>
<evidence type="ECO:0000269" key="22">
    <source>
    </source>
</evidence>
<evidence type="ECO:0000269" key="23">
    <source ref="2"/>
</evidence>
<evidence type="ECO:0000303" key="24">
    <source>
    </source>
</evidence>
<evidence type="ECO:0000305" key="25"/>
<evidence type="ECO:0007829" key="26">
    <source>
        <dbReference type="PDB" id="2DIL"/>
    </source>
</evidence>
<evidence type="ECO:0007829" key="27">
    <source>
        <dbReference type="PDB" id="7AAL"/>
    </source>
</evidence>
<gene>
    <name type="primary">PSTPIP1</name>
    <name type="synonym">CD2BP1</name>
</gene>
<reference key="1">
    <citation type="journal article" date="1998" name="EMBO J.">
        <title>A cdc15-like adaptor protein (CD2BP1) interacts with the CD2 cytoplasmic domain and regulates CD2-triggered adhesion.</title>
        <authorList>
            <person name="Li J."/>
            <person name="Nishizawa K."/>
            <person name="An W."/>
            <person name="Hussey R.E."/>
            <person name="Lialios F.E."/>
            <person name="Salgia R."/>
            <person name="Sunder-Plassmann R."/>
            <person name="Reinherz E.L."/>
        </authorList>
    </citation>
    <scope>NUCLEOTIDE SEQUENCE [MRNA] (ISOFORMS 1 AND 2)</scope>
    <scope>FUNCTION</scope>
    <scope>INTERACTION WITH CD2 AND PTPN12</scope>
    <scope>SUBCELLULAR LOCATION</scope>
    <scope>TISSUE SPECIFICITY</scope>
</reference>
<reference key="2">
    <citation type="submission" date="1997-03" db="EMBL/GenBank/DDBJ databases">
        <title>The human homologue of mouse PTP-PIP interactor protein.</title>
        <authorList>
            <person name="Wilson L.A."/>
            <person name="Fields D."/>
            <person name="Cruz L."/>
            <person name="Lasky L."/>
            <person name="Friesen J."/>
            <person name="Siminovitch K.A."/>
        </authorList>
    </citation>
    <scope>NUCLEOTIDE SEQUENCE [MRNA] (ISOFORM 1)</scope>
    <scope>VARIANTS HIS-48; LYS-106; HIS-146; LEU-149; SER-151; ASP-155 AND HIS-156</scope>
</reference>
<reference key="3">
    <citation type="journal article" date="2008" name="Nat. Methods">
        <title>Human protein factory for converting the transcriptome into an in vitro-expressed proteome.</title>
        <authorList>
            <person name="Goshima N."/>
            <person name="Kawamura Y."/>
            <person name="Fukumoto A."/>
            <person name="Miura A."/>
            <person name="Honma R."/>
            <person name="Satoh R."/>
            <person name="Wakamatsu A."/>
            <person name="Yamamoto J."/>
            <person name="Kimura K."/>
            <person name="Nishikawa T."/>
            <person name="Andoh T."/>
            <person name="Iida Y."/>
            <person name="Ishikawa K."/>
            <person name="Ito E."/>
            <person name="Kagawa N."/>
            <person name="Kaminaga C."/>
            <person name="Kanehori K."/>
            <person name="Kawakami B."/>
            <person name="Kenmochi K."/>
            <person name="Kimura R."/>
            <person name="Kobayashi M."/>
            <person name="Kuroita T."/>
            <person name="Kuwayama H."/>
            <person name="Maruyama Y."/>
            <person name="Matsuo K."/>
            <person name="Minami K."/>
            <person name="Mitsubori M."/>
            <person name="Mori M."/>
            <person name="Morishita R."/>
            <person name="Murase A."/>
            <person name="Nishikawa A."/>
            <person name="Nishikawa S."/>
            <person name="Okamoto T."/>
            <person name="Sakagami N."/>
            <person name="Sakamoto Y."/>
            <person name="Sasaki Y."/>
            <person name="Seki T."/>
            <person name="Sono S."/>
            <person name="Sugiyama A."/>
            <person name="Sumiya T."/>
            <person name="Takayama T."/>
            <person name="Takayama Y."/>
            <person name="Takeda H."/>
            <person name="Togashi T."/>
            <person name="Yahata K."/>
            <person name="Yamada H."/>
            <person name="Yanagisawa Y."/>
            <person name="Endo Y."/>
            <person name="Imamoto F."/>
            <person name="Kisu Y."/>
            <person name="Tanaka S."/>
            <person name="Isogai T."/>
            <person name="Imai J."/>
            <person name="Watanabe S."/>
            <person name="Nomura N."/>
        </authorList>
    </citation>
    <scope>NUCLEOTIDE SEQUENCE [LARGE SCALE MRNA] (ISOFORM 1)</scope>
</reference>
<reference key="4">
    <citation type="submission" date="2005-09" db="EMBL/GenBank/DDBJ databases">
        <authorList>
            <person name="Mural R.J."/>
            <person name="Istrail S."/>
            <person name="Sutton G.G."/>
            <person name="Florea L."/>
            <person name="Halpern A.L."/>
            <person name="Mobarry C.M."/>
            <person name="Lippert R."/>
            <person name="Walenz B."/>
            <person name="Shatkay H."/>
            <person name="Dew I."/>
            <person name="Miller J.R."/>
            <person name="Flanigan M.J."/>
            <person name="Edwards N.J."/>
            <person name="Bolanos R."/>
            <person name="Fasulo D."/>
            <person name="Halldorsson B.V."/>
            <person name="Hannenhalli S."/>
            <person name="Turner R."/>
            <person name="Yooseph S."/>
            <person name="Lu F."/>
            <person name="Nusskern D.R."/>
            <person name="Shue B.C."/>
            <person name="Zheng X.H."/>
            <person name="Zhong F."/>
            <person name="Delcher A.L."/>
            <person name="Huson D.H."/>
            <person name="Kravitz S.A."/>
            <person name="Mouchard L."/>
            <person name="Reinert K."/>
            <person name="Remington K.A."/>
            <person name="Clark A.G."/>
            <person name="Waterman M.S."/>
            <person name="Eichler E.E."/>
            <person name="Adams M.D."/>
            <person name="Hunkapiller M.W."/>
            <person name="Myers E.W."/>
            <person name="Venter J.C."/>
        </authorList>
    </citation>
    <scope>NUCLEOTIDE SEQUENCE [LARGE SCALE GENOMIC DNA]</scope>
</reference>
<reference key="5">
    <citation type="journal article" date="2004" name="Genome Res.">
        <title>The status, quality, and expansion of the NIH full-length cDNA project: the Mammalian Gene Collection (MGC).</title>
        <authorList>
            <consortium name="The MGC Project Team"/>
        </authorList>
    </citation>
    <scope>NUCLEOTIDE SEQUENCE [LARGE SCALE MRNA] (ISOFORM 1)</scope>
    <source>
        <tissue>Brain</tissue>
    </source>
</reference>
<reference key="6">
    <citation type="journal article" date="2003" name="Proc. Natl. Acad. Sci. U.S.A.">
        <title>Pyrin binds the PSTPIP1/CD2BP1 protein, defining familial Mediterranean fever and PAPA syndrome as disorders in the same pathway.</title>
        <authorList>
            <person name="Shoham N.G."/>
            <person name="Centola M."/>
            <person name="Mansfield E."/>
            <person name="Hull K.M."/>
            <person name="Wood G."/>
            <person name="Wise C.A."/>
            <person name="Kastner D.L."/>
        </authorList>
    </citation>
    <scope>INTERACTION WITH MEFV</scope>
    <scope>TISSUE SPECIFICITY</scope>
    <scope>CHARACTERIZATION OF VARIANTS PAPA THR-230 AND GLN-250</scope>
    <scope>MUTAGENESIS OF TRP-232 AND TYR-345</scope>
    <scope>INVOLVEMENT IN PAPA</scope>
</reference>
<reference key="7">
    <citation type="journal article" date="2007" name="Mol. Cell">
        <title>Pyrin activates the ASC pyroptosome in response to engagement by autoinflammatory PSTPIP1 mutants.</title>
        <authorList>
            <person name="Yu J.W."/>
            <person name="Fernandes-Alnemri T."/>
            <person name="Datta P."/>
            <person name="Wu J."/>
            <person name="Juliana C."/>
            <person name="Solorzano L."/>
            <person name="McCormick M."/>
            <person name="Zhang Z."/>
            <person name="Alnemri E.S."/>
        </authorList>
    </citation>
    <scope>FUNCTION</scope>
    <scope>SUBUNIT</scope>
    <scope>INTERACTION WITH MEFV</scope>
    <scope>CHARACTERIZATION OF VARIANTS THR-230 AND GLN-250</scope>
</reference>
<reference key="8">
    <citation type="journal article" date="2008" name="Mol. Biol. Cell">
        <title>The PCH family member proline-serine-threonine phosphatase-interacting protein 1 targets to the leukocyte uropod and regulates directed cell migration.</title>
        <authorList>
            <person name="Cooper K.M."/>
            <person name="Bennin D.A."/>
            <person name="Huttenlocher A."/>
        </authorList>
    </citation>
    <scope>FUNCTION</scope>
    <scope>INTERACTION WITH DNM2</scope>
    <scope>SUBCELLULAR LOCATION</scope>
</reference>
<reference key="9">
    <citation type="journal article" date="2009" name="BMC Immunol.">
        <title>Identification of SH3 domain interaction partners of human FasL (CD178) by phage display screening.</title>
        <authorList>
            <person name="Voss M."/>
            <person name="Lettau M."/>
            <person name="Janssen O."/>
        </authorList>
    </citation>
    <scope>INTERACTION WITH FASLG</scope>
</reference>
<reference key="10">
    <citation type="journal article" date="2009" name="Exp. Biol. Med. (Maywood)">
        <title>Pyrin and ASC co-localize to cellular sites that are rich in polymerizing actin.</title>
        <authorList>
            <person name="Waite A.L."/>
            <person name="Schaner P."/>
            <person name="Hu C."/>
            <person name="Richards N."/>
            <person name="Balci-Peynircioglu B."/>
            <person name="Hong A."/>
            <person name="Fox M."/>
            <person name="Gumucio D.L."/>
        </authorList>
    </citation>
    <scope>FUNCTION</scope>
    <scope>SUBCELLULAR LOCATION</scope>
    <scope>INTERACTION WITH MEFV</scope>
</reference>
<reference key="11">
    <citation type="journal article" date="2009" name="PLoS ONE">
        <title>Pyrin Modulates the Intracellular Distribution of PSTPIP1.</title>
        <authorList>
            <person name="Waite A.L."/>
            <person name="Schaner P."/>
            <person name="Richards N."/>
            <person name="Balci-Peynircioglu B."/>
            <person name="Masters S.L."/>
            <person name="Brydges S.D."/>
            <person name="Fox M."/>
            <person name="Hong A."/>
            <person name="Yilmaz E."/>
            <person name="Kastner D.L."/>
            <person name="Reinherz E.L."/>
            <person name="Gumucio D.L."/>
        </authorList>
    </citation>
    <scope>FUNCTION</scope>
    <scope>SUBUNIT</scope>
    <scope>SUBCELLULAR LOCATION</scope>
    <scope>CHARACTERIZATION OF VARIANTS THR-230 AND GLN-250</scope>
    <scope>MUTAGENESIS OF TRP-232 AND ASP-266</scope>
</reference>
<reference key="12">
    <citation type="submission" date="2007-02" db="PDB data bank">
        <title>Solution structure of the SH3 domain of the human proline-serine-threonine phosphatase-interacting protein 1.</title>
        <authorList>
            <consortium name="RIKEN structural genomics initiative (RSGI)"/>
        </authorList>
    </citation>
    <scope>STRUCTURE BY NMR OF 358-416</scope>
</reference>
<reference key="13">
    <citation type="journal article" date="2002" name="Hum. Mol. Genet.">
        <title>Mutations in CD2BP1 disrupt binding to PTP PEST and are responsible for PAPA syndrome, an autoinflammatory disorder.</title>
        <authorList>
            <person name="Wise C.A."/>
            <person name="Gillum J.D."/>
            <person name="Seidman C.E."/>
            <person name="Lindor N.M."/>
            <person name="Veile R."/>
            <person name="Bashiardes S."/>
            <person name="Lovett M."/>
        </authorList>
    </citation>
    <scope>VARIANTS PAPA THR-230 AND GLN-250</scope>
    <scope>INVOLVEMENT IN PAPA</scope>
</reference>
<reference key="14">
    <citation type="journal article" date="2012" name="Arthritis Rheum.">
        <title>Brief report: genotype, phenotype, and clinical course in five patients with PAPA syndrome (pyogenic sterile arthritis, pyoderma gangrenosum, and acne).</title>
        <authorList>
            <person name="Demidowich A.P."/>
            <person name="Freeman A.F."/>
            <person name="Kuhns D.B."/>
            <person name="Aksentijevich I."/>
            <person name="Gallin J.I."/>
            <person name="Turner M.L."/>
            <person name="Kastner D.L."/>
            <person name="Holland S.M."/>
        </authorList>
    </citation>
    <scope>VARIANTS PAPA THR-230 AND GLN-250</scope>
    <scope>VARIANT AICZC LYS-250</scope>
    <scope>INVOLVEMENT IN PAPA</scope>
    <scope>INVOLVEMENT IN AICZC</scope>
</reference>
<reference key="15">
    <citation type="journal article" date="2015" name="J. Allergy Clin. Immunol.">
        <title>Single amino acid charge switch defines clinically distinct proline-serine-threonine phosphatase-interacting protein 1 (PSTPIP1)-associated inflammatory diseases.</title>
        <authorList>
            <person name="Holzinger D."/>
            <person name="Fassl S.K."/>
            <person name="de Jager W."/>
            <person name="Lohse P."/>
            <person name="Roehrig U.F."/>
            <person name="Gattorno M."/>
            <person name="Omenetti A."/>
            <person name="Chiesa S."/>
            <person name="Schena F."/>
            <person name="Austermann J."/>
            <person name="Vogl T."/>
            <person name="Kuhns D.B."/>
            <person name="Holland S.M."/>
            <person name="Rodriguez-Gallego C."/>
            <person name="Lopez-Almaraz R."/>
            <person name="Arostegui J.I."/>
            <person name="Colino E."/>
            <person name="Roldan R."/>
            <person name="Fessatou S."/>
            <person name="Isidor B."/>
            <person name="Poignant S."/>
            <person name="Ito K."/>
            <person name="Epple H.J."/>
            <person name="Bernstein J.A."/>
            <person name="Jeng M."/>
            <person name="Frankovich J."/>
            <person name="Lionetti G."/>
            <person name="Church J.A."/>
            <person name="Ong P.Y."/>
            <person name="LaPlant M."/>
            <person name="Abinun M."/>
            <person name="Skinner R."/>
            <person name="Bigley V."/>
            <person name="Sachs U.J."/>
            <person name="Hinze C."/>
            <person name="Hoppenreijs E."/>
            <person name="Ehrchen J."/>
            <person name="Foell D."/>
            <person name="Chae J.J."/>
            <person name="Ombrello A."/>
            <person name="Aksentijevich I."/>
            <person name="Sunderkoetter C."/>
            <person name="Roth J."/>
        </authorList>
    </citation>
    <scope>VARIANTS AICZC LYS-250 AND LYS-257</scope>
    <scope>CHARACTERIZATION OF VARIANTS AICZC LYS-250 AND GLN-250</scope>
    <scope>INVOLVEMENT IN AICZC</scope>
</reference>
<reference key="16">
    <citation type="journal article" date="2017" name="Clin. Exp. Rheumatol. 35 Suppl.">
        <title>Haematological involvement associated with a mild autoinflammatory phenotype, in two patients carrying the E250K mutation of PSTPIP1.</title>
        <authorList>
            <person name="Belelli E."/>
            <person name="Passarelli C."/>
            <person name="Pardeo M."/>
            <person name="Holzinger D."/>
            <person name="De Benedetti F."/>
            <person name="Insalaco A."/>
        </authorList>
    </citation>
    <scope>VARIANT AICZC LYS-250</scope>
    <scope>INVOLVEMENT IN AICZC</scope>
</reference>
<reference key="17">
    <citation type="journal article" date="2017" name="Infection">
        <title>Pyogenic arthritis, pyoderma gangrenosum, and acne (PAPA) syndrome: differential diagnosis of septic arthritis by regular detection of exceedingly high synovial cell counts.</title>
        <authorList>
            <person name="Loeffler W."/>
            <person name="Lohse P."/>
            <person name="Weihmayr T."/>
            <person name="Widenmayer W."/>
        </authorList>
    </citation>
    <scope>VARIANT PAPA THR-230</scope>
    <scope>INVOLVEMENT IN PAPA</scope>
</reference>
<reference key="18">
    <citation type="journal article" date="2018" name="Br. J. Dermatol.">
        <title>The expanding spectrum of clinical phenotypes associated with PSTPIP1 mutations: from PAPA to PAMI syndrome and beyond.</title>
        <authorList>
            <person name="Kloetgen H.W."/>
            <person name="Beltraminelli H."/>
            <person name="Yawalkar N."/>
            <person name="van Gijn M.E."/>
            <person name="Holzinger D."/>
            <person name="Borradori L."/>
        </authorList>
    </citation>
    <scope>VARIANT AICZC LYS-250</scope>
    <scope>INVOLVEMENT IN AICZC</scope>
</reference>
<reference key="19">
    <citation type="journal article" date="2019" name="Pediatr. Blood Cancer">
        <title>PSTPIP1-associated myeloid-related proteinemia inflammatory syndrome: A rare cause of childhood neutropenia associated with systemic inflammation and hyperzincemia.</title>
        <authorList>
            <person name="Hashmi S.K."/>
            <person name="Bergstrom K."/>
            <person name="Bertuch A.A."/>
            <person name="Despotovic J.M."/>
            <person name="Muscal E."/>
            <person name="Xia F."/>
            <person name="Bi W."/>
            <person name="Marcogliese A."/>
            <person name="Diaz R."/>
        </authorList>
    </citation>
    <scope>VARIANTS AICZC LYS-250 AND LYS-257</scope>
    <scope>INVOLVEMENT IN AICZC</scope>
</reference>
<reference key="20">
    <citation type="journal article" date="2021" name="Am. J. Med. Genet. A">
        <title>PAMI syndrome: A rare cause that can be easily misdiagnosed.</title>
        <authorList>
            <person name="Xu X.M."/>
            <person name="Huang H."/>
            <person name="Ding F."/>
            <person name="Yang Z."/>
            <person name="Wang J."/>
            <person name="Jin Y.L."/>
        </authorList>
    </citation>
    <scope>VARIANT AICZC LYS-250</scope>
    <scope>INVOLVEMENT IN AICZC</scope>
</reference>
<reference key="21">
    <citation type="journal article" date="2021" name="Case Rep. Immunol.">
        <title>Clinical and genetic findings of the first report of PAPA syndrome in Brazil.</title>
        <authorList>
            <person name="Fernandes S.J."/>
            <person name="Valdomir Nadaf M.I."/>
            <person name="Monteiro N.H."/>
            <person name="Nadaf I.N."/>
            <person name="Lelis C.R."/>
            <person name="Takano B.Y."/>
            <person name="Gabriella de Camargo Monteiro B."/>
            <person name="Gabriella de Camargo Monteiro N."/>
            <person name="Takano O.A."/>
            <person name="Mendonca L.O."/>
        </authorList>
    </citation>
    <scope>VARIANT PAPA THR-230</scope>
    <scope>INVOLVEMENT IN PAPA</scope>
</reference>
<reference key="22">
    <citation type="journal article" date="2022" name="Front. Immunol.">
        <title>Strong inflammatory signatures in the neutrophils of PAMI syndrome.</title>
        <authorList>
            <person name="Zheng W."/>
            <person name="Fan X."/>
            <person name="Yang Z."/>
            <person name="Shangguan Y."/>
            <person name="Jin T."/>
            <person name="Liu Y."/>
            <person name="Huang J."/>
            <person name="Ye X."/>
            <person name="Zhou Q."/>
            <person name="Li X."/>
        </authorList>
    </citation>
    <scope>VARIANT AICZC LYS-250</scope>
    <scope>INVOLVEMENT IN AICZC</scope>
</reference>
<feature type="chain" id="PRO_0000058539" description="Proline-serine-threonine phosphatase-interacting protein 1">
    <location>
        <begin position="1"/>
        <end position="416"/>
    </location>
</feature>
<feature type="domain" description="F-BAR" evidence="5">
    <location>
        <begin position="5"/>
        <end position="264"/>
    </location>
</feature>
<feature type="domain" description="SH3" evidence="4">
    <location>
        <begin position="359"/>
        <end position="416"/>
    </location>
</feature>
<feature type="coiled-coil region" evidence="3">
    <location>
        <begin position="166"/>
        <end position="212"/>
    </location>
</feature>
<feature type="modified residue" description="Phosphoserine" evidence="2">
    <location>
        <position position="318"/>
    </location>
</feature>
<feature type="modified residue" description="Phosphotyrosine" evidence="2">
    <location>
        <position position="345"/>
    </location>
</feature>
<feature type="splice variant" id="VSP_015627" description="In isoform 2." evidence="24">
    <original>APVPYQNYYDREVTPLTSSPGIQPSCGMIK</original>
    <variation>GEVRLADSAAS</variation>
    <location>
        <begin position="280"/>
        <end position="309"/>
    </location>
</feature>
<feature type="sequence variant" id="VAR_023515" description="In dbSNP:rs1141038." evidence="23">
    <original>Q</original>
    <variation>H</variation>
    <location>
        <position position="48"/>
    </location>
</feature>
<feature type="sequence variant" id="VAR_023516" description="In dbSNP:rs1141039." evidence="23">
    <original>E</original>
    <variation>K</variation>
    <location>
        <position position="106"/>
    </location>
</feature>
<feature type="sequence variant" id="VAR_023517" description="In dbSNP:rs1141041." evidence="23">
    <original>Q</original>
    <variation>H</variation>
    <location>
        <position position="146"/>
    </location>
</feature>
<feature type="sequence variant" id="VAR_023518" description="In dbSNP:rs1141042." evidence="23">
    <original>R</original>
    <variation>L</variation>
    <location>
        <position position="149"/>
    </location>
</feature>
<feature type="sequence variant" id="VAR_023519" description="In dbSNP:rs1141043." evidence="23">
    <original>A</original>
    <variation>S</variation>
    <location>
        <position position="151"/>
    </location>
</feature>
<feature type="sequence variant" id="VAR_023520" description="In dbSNP:rs1141044." evidence="23">
    <original>E</original>
    <variation>D</variation>
    <location>
        <position position="155"/>
    </location>
</feature>
<feature type="sequence variant" id="VAR_023521" description="In dbSNP:rs1141045." evidence="23">
    <original>Q</original>
    <variation>H</variation>
    <location>
        <position position="156"/>
    </location>
</feature>
<feature type="sequence variant" id="VAR_023522" description="In PAPA; pathogenic; markedly increased binding to MEFV; accentuates IL1B secretion; no effect on filament formation; increased induction of MEFV in response to retroviral infection; dbSNP:rs121908130." evidence="6 7 8 11 13 15 20">
    <original>A</original>
    <variation>T</variation>
    <location>
        <position position="230"/>
    </location>
</feature>
<feature type="sequence variant" id="VAR_070635" description="In AICZC; pathogenic; markedly increased binding to MEFV; dbSNP:rs28939089." evidence="13 14 16 17 18 19 21">
    <original>E</original>
    <variation>K</variation>
    <location>
        <position position="250"/>
    </location>
</feature>
<feature type="sequence variant" id="VAR_023523" description="In PAPA and AICZC; pathogenic; markedly increased binding to MEFV; accentuates IL1B secretion; increased induction of MEFV in response to retroviral infection; dbSNP:rs28939089." evidence="6 7 8 11 13 14">
    <original>E</original>
    <variation>Q</variation>
    <location>
        <position position="250"/>
    </location>
</feature>
<feature type="sequence variant" id="VAR_090032" description="In AICZC; uncertain significance." evidence="14 18">
    <original>E</original>
    <variation>K</variation>
    <location>
        <position position="257"/>
    </location>
</feature>
<feature type="mutagenesis site" description="Abolishes binding to MEFV. Cytoplasmic filaments are finer with fewer branches." evidence="7 11">
    <original>W</original>
    <variation>A</variation>
    <location>
        <position position="232"/>
    </location>
</feature>
<feature type="mutagenesis site" description="No effect on filament formation." evidence="11">
    <original>D</original>
    <variation>N</variation>
    <location>
        <position position="266"/>
    </location>
</feature>
<feature type="mutagenesis site" description="Decreases binding to MEFV." evidence="7">
    <original>Y</original>
    <variation>F</variation>
    <location>
        <position position="345"/>
    </location>
</feature>
<feature type="sequence conflict" description="In Ref. 2; AAD00762." evidence="25" ref="2">
    <original>L</original>
    <variation>F</variation>
    <location>
        <position position="367"/>
    </location>
</feature>
<feature type="helix" evidence="27">
    <location>
        <begin position="7"/>
        <end position="10"/>
    </location>
</feature>
<feature type="helix" evidence="27">
    <location>
        <begin position="20"/>
        <end position="63"/>
    </location>
</feature>
<feature type="helix" evidence="27">
    <location>
        <begin position="71"/>
        <end position="161"/>
    </location>
</feature>
<feature type="turn" evidence="27">
    <location>
        <begin position="162"/>
        <end position="164"/>
    </location>
</feature>
<feature type="helix" evidence="27">
    <location>
        <begin position="167"/>
        <end position="257"/>
    </location>
</feature>
<feature type="helix" evidence="27">
    <location>
        <begin position="261"/>
        <end position="272"/>
    </location>
</feature>
<feature type="strand" evidence="27">
    <location>
        <begin position="275"/>
        <end position="277"/>
    </location>
</feature>
<feature type="strand" evidence="26">
    <location>
        <begin position="363"/>
        <end position="365"/>
    </location>
</feature>
<feature type="strand" evidence="26">
    <location>
        <begin position="373"/>
        <end position="377"/>
    </location>
</feature>
<feature type="strand" evidence="26">
    <location>
        <begin position="385"/>
        <end position="390"/>
    </location>
</feature>
<feature type="strand" evidence="26">
    <location>
        <begin position="393"/>
        <end position="401"/>
    </location>
</feature>
<feature type="strand" evidence="26">
    <location>
        <begin position="404"/>
        <end position="409"/>
    </location>
</feature>
<feature type="helix" evidence="26">
    <location>
        <begin position="410"/>
        <end position="412"/>
    </location>
</feature>
<keyword id="KW-0002">3D-structure</keyword>
<keyword id="KW-0025">Alternative splicing</keyword>
<keyword id="KW-0130">Cell adhesion</keyword>
<keyword id="KW-1003">Cell membrane</keyword>
<keyword id="KW-0966">Cell projection</keyword>
<keyword id="KW-0175">Coiled coil</keyword>
<keyword id="KW-0963">Cytoplasm</keyword>
<keyword id="KW-0206">Cytoskeleton</keyword>
<keyword id="KW-0225">Disease variant</keyword>
<keyword id="KW-0254">Endocytosis</keyword>
<keyword id="KW-0391">Immunity</keyword>
<keyword id="KW-0395">Inflammatory response</keyword>
<keyword id="KW-0399">Innate immunity</keyword>
<keyword id="KW-0472">Membrane</keyword>
<keyword id="KW-0597">Phosphoprotein</keyword>
<keyword id="KW-1267">Proteomics identification</keyword>
<keyword id="KW-1185">Reference proteome</keyword>
<keyword id="KW-0728">SH3 domain</keyword>
<organism>
    <name type="scientific">Homo sapiens</name>
    <name type="common">Human</name>
    <dbReference type="NCBI Taxonomy" id="9606"/>
    <lineage>
        <taxon>Eukaryota</taxon>
        <taxon>Metazoa</taxon>
        <taxon>Chordata</taxon>
        <taxon>Craniata</taxon>
        <taxon>Vertebrata</taxon>
        <taxon>Euteleostomi</taxon>
        <taxon>Mammalia</taxon>
        <taxon>Eutheria</taxon>
        <taxon>Euarchontoglires</taxon>
        <taxon>Primates</taxon>
        <taxon>Haplorrhini</taxon>
        <taxon>Catarrhini</taxon>
        <taxon>Hominidae</taxon>
        <taxon>Homo</taxon>
    </lineage>
</organism>
<dbReference type="EMBL" id="AF038602">
    <property type="protein sequence ID" value="AAD11958.1"/>
    <property type="molecule type" value="mRNA"/>
</dbReference>
<dbReference type="EMBL" id="AF038603">
    <property type="protein sequence ID" value="AAD11959.1"/>
    <property type="molecule type" value="mRNA"/>
</dbReference>
<dbReference type="EMBL" id="U94778">
    <property type="protein sequence ID" value="AAD00762.1"/>
    <property type="molecule type" value="mRNA"/>
</dbReference>
<dbReference type="EMBL" id="AB451310">
    <property type="protein sequence ID" value="BAG70124.1"/>
    <property type="molecule type" value="mRNA"/>
</dbReference>
<dbReference type="EMBL" id="AB451440">
    <property type="protein sequence ID" value="BAG70254.1"/>
    <property type="molecule type" value="mRNA"/>
</dbReference>
<dbReference type="EMBL" id="CH471136">
    <property type="protein sequence ID" value="EAW99213.1"/>
    <property type="molecule type" value="Genomic_DNA"/>
</dbReference>
<dbReference type="EMBL" id="BC008602">
    <property type="protein sequence ID" value="AAH08602.1"/>
    <property type="molecule type" value="mRNA"/>
</dbReference>
<dbReference type="CCDS" id="CCDS45312.1">
    <molecule id="O43586-1"/>
</dbReference>
<dbReference type="CCDS" id="CCDS81910.1">
    <molecule id="O43586-2"/>
</dbReference>
<dbReference type="RefSeq" id="NP_001308064.1">
    <molecule id="O43586-2"/>
    <property type="nucleotide sequence ID" value="NM_001321135.2"/>
</dbReference>
<dbReference type="RefSeq" id="NP_001308066.1">
    <property type="nucleotide sequence ID" value="NM_001321137.1"/>
</dbReference>
<dbReference type="RefSeq" id="NP_003969.2">
    <molecule id="O43586-1"/>
    <property type="nucleotide sequence ID" value="NM_003978.4"/>
</dbReference>
<dbReference type="PDB" id="2DIL">
    <property type="method" value="NMR"/>
    <property type="chains" value="A=361-416"/>
</dbReference>
<dbReference type="PDB" id="7AAL">
    <property type="method" value="X-ray"/>
    <property type="resolution" value="1.97 A"/>
    <property type="chains" value="A/B=1-289"/>
</dbReference>
<dbReference type="PDB" id="7AAM">
    <property type="method" value="X-ray"/>
    <property type="resolution" value="2.15 A"/>
    <property type="chains" value="A/B=1-289"/>
</dbReference>
<dbReference type="PDB" id="7AAN">
    <property type="method" value="X-ray"/>
    <property type="resolution" value="2.14 A"/>
    <property type="chains" value="A/B=1-289"/>
</dbReference>
<dbReference type="PDBsum" id="2DIL"/>
<dbReference type="PDBsum" id="7AAL"/>
<dbReference type="PDBsum" id="7AAM"/>
<dbReference type="PDBsum" id="7AAN"/>
<dbReference type="SMR" id="O43586"/>
<dbReference type="BioGRID" id="114513">
    <property type="interactions" value="94"/>
</dbReference>
<dbReference type="FunCoup" id="O43586">
    <property type="interactions" value="334"/>
</dbReference>
<dbReference type="IntAct" id="O43586">
    <property type="interactions" value="54"/>
</dbReference>
<dbReference type="MINT" id="O43586"/>
<dbReference type="STRING" id="9606.ENSP00000452746"/>
<dbReference type="GlyGen" id="O43586">
    <property type="glycosylation" value="2 sites, 1 O-linked glycan (1 site)"/>
</dbReference>
<dbReference type="iPTMnet" id="O43586"/>
<dbReference type="PhosphoSitePlus" id="O43586"/>
<dbReference type="SwissPalm" id="O43586"/>
<dbReference type="BioMuta" id="PSTPIP1"/>
<dbReference type="jPOST" id="O43586"/>
<dbReference type="MassIVE" id="O43586"/>
<dbReference type="PaxDb" id="9606-ENSP00000452746"/>
<dbReference type="PeptideAtlas" id="O43586"/>
<dbReference type="ProteomicsDB" id="49064">
    <molecule id="O43586-1"/>
</dbReference>
<dbReference type="ProteomicsDB" id="49065">
    <molecule id="O43586-2"/>
</dbReference>
<dbReference type="Antibodypedia" id="2771">
    <property type="antibodies" value="179 antibodies from 26 providers"/>
</dbReference>
<dbReference type="DNASU" id="9051"/>
<dbReference type="Ensembl" id="ENST00000558012.6">
    <molecule id="O43586-1"/>
    <property type="protein sequence ID" value="ENSP00000452746.1"/>
    <property type="gene ID" value="ENSG00000140368.14"/>
</dbReference>
<dbReference type="Ensembl" id="ENST00000559295.5">
    <molecule id="O43586-2"/>
    <property type="protein sequence ID" value="ENSP00000452743.1"/>
    <property type="gene ID" value="ENSG00000140368.14"/>
</dbReference>
<dbReference type="GeneID" id="9051"/>
<dbReference type="KEGG" id="hsa:9051"/>
<dbReference type="MANE-Select" id="ENST00000558012.6">
    <property type="protein sequence ID" value="ENSP00000452746.1"/>
    <property type="RefSeq nucleotide sequence ID" value="NM_003978.5"/>
    <property type="RefSeq protein sequence ID" value="NP_003969.2"/>
</dbReference>
<dbReference type="UCSC" id="uc002bcf.3">
    <molecule id="O43586-1"/>
    <property type="organism name" value="human"/>
</dbReference>
<dbReference type="AGR" id="HGNC:9580"/>
<dbReference type="CTD" id="9051"/>
<dbReference type="DisGeNET" id="9051"/>
<dbReference type="GeneCards" id="PSTPIP1"/>
<dbReference type="HGNC" id="HGNC:9580">
    <property type="gene designation" value="PSTPIP1"/>
</dbReference>
<dbReference type="HPA" id="ENSG00000140368">
    <property type="expression patterns" value="Group enriched (bone marrow, lymphoid tissue)"/>
</dbReference>
<dbReference type="MalaCards" id="PSTPIP1"/>
<dbReference type="MIM" id="601979">
    <property type="type" value="phenotype"/>
</dbReference>
<dbReference type="MIM" id="604416">
    <property type="type" value="phenotype"/>
</dbReference>
<dbReference type="MIM" id="606347">
    <property type="type" value="gene"/>
</dbReference>
<dbReference type="neXtProt" id="NX_O43586"/>
<dbReference type="OpenTargets" id="ENSG00000140368"/>
<dbReference type="Orphanet" id="251523">
    <property type="disease" value="Hyperzincemia and hypercalprotectinemia"/>
</dbReference>
<dbReference type="Orphanet" id="69126">
    <property type="disease" value="PAPA syndrome"/>
</dbReference>
<dbReference type="PharmGKB" id="PA33931"/>
<dbReference type="VEuPathDB" id="HostDB:ENSG00000140368"/>
<dbReference type="eggNOG" id="KOG2398">
    <property type="taxonomic scope" value="Eukaryota"/>
</dbReference>
<dbReference type="GeneTree" id="ENSGT00940000156932"/>
<dbReference type="InParanoid" id="O43586"/>
<dbReference type="OMA" id="PIEYQNY"/>
<dbReference type="PAN-GO" id="O43586">
    <property type="GO annotations" value="5 GO annotations based on evolutionary models"/>
</dbReference>
<dbReference type="PhylomeDB" id="O43586"/>
<dbReference type="TreeFam" id="TF313677"/>
<dbReference type="PathwayCommons" id="O43586"/>
<dbReference type="Reactome" id="R-HSA-844456">
    <property type="pathway name" value="The NLRP3 inflammasome"/>
</dbReference>
<dbReference type="Reactome" id="R-HSA-9660826">
    <property type="pathway name" value="Purinergic signaling in leishmaniasis infection"/>
</dbReference>
<dbReference type="SignaLink" id="O43586"/>
<dbReference type="SIGNOR" id="O43586"/>
<dbReference type="BioGRID-ORCS" id="9051">
    <property type="hits" value="34 hits in 1152 CRISPR screens"/>
</dbReference>
<dbReference type="ChiTaRS" id="PSTPIP1">
    <property type="organism name" value="human"/>
</dbReference>
<dbReference type="EvolutionaryTrace" id="O43586"/>
<dbReference type="GeneWiki" id="PSTPIP1"/>
<dbReference type="GenomeRNAi" id="9051"/>
<dbReference type="Pharos" id="O43586">
    <property type="development level" value="Tbio"/>
</dbReference>
<dbReference type="PRO" id="PR:O43586"/>
<dbReference type="Proteomes" id="UP000005640">
    <property type="component" value="Chromosome 15"/>
</dbReference>
<dbReference type="RNAct" id="O43586">
    <property type="molecule type" value="protein"/>
</dbReference>
<dbReference type="Bgee" id="ENSG00000140368">
    <property type="expression patterns" value="Expressed in granulocyte and 109 other cell types or tissues"/>
</dbReference>
<dbReference type="ExpressionAtlas" id="O43586">
    <property type="expression patterns" value="baseline and differential"/>
</dbReference>
<dbReference type="GO" id="GO:0032154">
    <property type="term" value="C:cleavage furrow"/>
    <property type="evidence" value="ECO:0007669"/>
    <property type="project" value="UniProtKB-SubCell"/>
</dbReference>
<dbReference type="GO" id="GO:0005737">
    <property type="term" value="C:cytoplasm"/>
    <property type="evidence" value="ECO:0000318"/>
    <property type="project" value="GO_Central"/>
</dbReference>
<dbReference type="GO" id="GO:0005856">
    <property type="term" value="C:cytoskeleton"/>
    <property type="evidence" value="ECO:0007669"/>
    <property type="project" value="UniProtKB-SubCell"/>
</dbReference>
<dbReference type="GO" id="GO:0005829">
    <property type="term" value="C:cytosol"/>
    <property type="evidence" value="ECO:0000314"/>
    <property type="project" value="HPA"/>
</dbReference>
<dbReference type="GO" id="GO:0030027">
    <property type="term" value="C:lamellipodium"/>
    <property type="evidence" value="ECO:0007669"/>
    <property type="project" value="UniProtKB-SubCell"/>
</dbReference>
<dbReference type="GO" id="GO:0016020">
    <property type="term" value="C:membrane"/>
    <property type="evidence" value="ECO:0007005"/>
    <property type="project" value="UniProtKB"/>
</dbReference>
<dbReference type="GO" id="GO:0048471">
    <property type="term" value="C:perinuclear region of cytoplasm"/>
    <property type="evidence" value="ECO:0007669"/>
    <property type="project" value="UniProtKB-SubCell"/>
</dbReference>
<dbReference type="GO" id="GO:0005886">
    <property type="term" value="C:plasma membrane"/>
    <property type="evidence" value="ECO:0000314"/>
    <property type="project" value="HPA"/>
</dbReference>
<dbReference type="GO" id="GO:0001931">
    <property type="term" value="C:uropod"/>
    <property type="evidence" value="ECO:0007669"/>
    <property type="project" value="UniProtKB-SubCell"/>
</dbReference>
<dbReference type="GO" id="GO:0042802">
    <property type="term" value="F:identical protein binding"/>
    <property type="evidence" value="ECO:0000353"/>
    <property type="project" value="IntAct"/>
</dbReference>
<dbReference type="GO" id="GO:0007155">
    <property type="term" value="P:cell adhesion"/>
    <property type="evidence" value="ECO:0000304"/>
    <property type="project" value="ProtInc"/>
</dbReference>
<dbReference type="GO" id="GO:0006897">
    <property type="term" value="P:endocytosis"/>
    <property type="evidence" value="ECO:0007669"/>
    <property type="project" value="UniProtKB-KW"/>
</dbReference>
<dbReference type="GO" id="GO:0006954">
    <property type="term" value="P:inflammatory response"/>
    <property type="evidence" value="ECO:0007669"/>
    <property type="project" value="UniProtKB-KW"/>
</dbReference>
<dbReference type="GO" id="GO:0045087">
    <property type="term" value="P:innate immune response"/>
    <property type="evidence" value="ECO:0007669"/>
    <property type="project" value="UniProtKB-KW"/>
</dbReference>
<dbReference type="GO" id="GO:0007165">
    <property type="term" value="P:signal transduction"/>
    <property type="evidence" value="ECO:0000304"/>
    <property type="project" value="ProtInc"/>
</dbReference>
<dbReference type="CDD" id="cd11824">
    <property type="entry name" value="SH3_PSTPIP1"/>
    <property type="match status" value="1"/>
</dbReference>
<dbReference type="FunFam" id="1.20.1270.60:FF:000037">
    <property type="entry name" value="Proline-serine-threonine phosphatase interacting protein 1"/>
    <property type="match status" value="1"/>
</dbReference>
<dbReference type="FunFam" id="2.30.30.40:FF:000150">
    <property type="entry name" value="Proline-serine-threonine phosphatase interacting protein 1"/>
    <property type="match status" value="1"/>
</dbReference>
<dbReference type="Gene3D" id="1.20.1270.60">
    <property type="entry name" value="Arfaptin homology (AH) domain/BAR domain"/>
    <property type="match status" value="1"/>
</dbReference>
<dbReference type="Gene3D" id="2.30.30.40">
    <property type="entry name" value="SH3 Domains"/>
    <property type="match status" value="1"/>
</dbReference>
<dbReference type="InterPro" id="IPR027267">
    <property type="entry name" value="AH/BAR_dom_sf"/>
</dbReference>
<dbReference type="InterPro" id="IPR031160">
    <property type="entry name" value="F_BAR"/>
</dbReference>
<dbReference type="InterPro" id="IPR001060">
    <property type="entry name" value="FCH_dom"/>
</dbReference>
<dbReference type="InterPro" id="IPR030777">
    <property type="entry name" value="PSTPIP1_SH3"/>
</dbReference>
<dbReference type="InterPro" id="IPR036028">
    <property type="entry name" value="SH3-like_dom_sf"/>
</dbReference>
<dbReference type="InterPro" id="IPR001452">
    <property type="entry name" value="SH3_domain"/>
</dbReference>
<dbReference type="PANTHER" id="PTHR23065">
    <property type="entry name" value="PROLINE-SERINE-THREONINE PHOSPHATASE INTERACTING PROTEIN 1"/>
    <property type="match status" value="1"/>
</dbReference>
<dbReference type="PANTHER" id="PTHR23065:SF51">
    <property type="entry name" value="PROLINE-SERINE-THREONINE PHOSPHATASE-INTERACTING PROTEIN 1"/>
    <property type="match status" value="1"/>
</dbReference>
<dbReference type="Pfam" id="PF00611">
    <property type="entry name" value="FCH"/>
    <property type="match status" value="1"/>
</dbReference>
<dbReference type="Pfam" id="PF00018">
    <property type="entry name" value="SH3_1"/>
    <property type="match status" value="1"/>
</dbReference>
<dbReference type="PRINTS" id="PR00452">
    <property type="entry name" value="SH3DOMAIN"/>
</dbReference>
<dbReference type="PRINTS" id="PR01887">
    <property type="entry name" value="SPECTRNALPHA"/>
</dbReference>
<dbReference type="SMART" id="SM00055">
    <property type="entry name" value="FCH"/>
    <property type="match status" value="1"/>
</dbReference>
<dbReference type="SMART" id="SM00326">
    <property type="entry name" value="SH3"/>
    <property type="match status" value="1"/>
</dbReference>
<dbReference type="SUPFAM" id="SSF103657">
    <property type="entry name" value="BAR/IMD domain-like"/>
    <property type="match status" value="1"/>
</dbReference>
<dbReference type="SUPFAM" id="SSF50044">
    <property type="entry name" value="SH3-domain"/>
    <property type="match status" value="1"/>
</dbReference>
<dbReference type="PROSITE" id="PS51741">
    <property type="entry name" value="F_BAR"/>
    <property type="match status" value="1"/>
</dbReference>
<dbReference type="PROSITE" id="PS50002">
    <property type="entry name" value="SH3"/>
    <property type="match status" value="1"/>
</dbReference>
<proteinExistence type="evidence at protein level"/>
<accession>O43586</accession>
<accession>B5BU74</accession>
<accession>B5BUK4</accession>
<accession>O43585</accession>
<accession>O95657</accession>
<protein>
    <recommendedName>
        <fullName>Proline-serine-threonine phosphatase-interacting protein 1</fullName>
        <shortName>PEST phosphatase-interacting protein 1</shortName>
    </recommendedName>
    <alternativeName>
        <fullName>CD2-binding protein 1</fullName>
    </alternativeName>
    <alternativeName>
        <fullName>H-PIP</fullName>
    </alternativeName>
</protein>
<comment type="function">
    <text evidence="1 8 9 10 11 22">Involved in regulation of the actin cytoskeleton. May regulate WAS actin-bundling activity. Bridges the interaction between ABL1 and PTPN18 leading to ABL1 dephosphorylation. May play a role as a scaffold protein between PTPN12 and WAS and allow PTPN12 to dephosphorylate WAS. Has the potential to physically couple CD2 and CD2AP to WAS. Acts downstream of CD2 and CD2AP to recruit WAS to the T-cell:APC contact site so as to promote the actin polymerization required for synapse induction during T-cell activation (By similarity). Down-regulates CD2-stimulated adhesion through the coupling of PTPN12 to CD2. Also has a role in innate immunity and the inflammatory response. Recruited to inflammasomes by MEFV. Induces formation of pyroptosomes, large supramolecular structures composed of oligomerized PYCARD dimers which form prior to inflammatory apoptosis. Binding to MEFV allows MEFV to bind to PYCARD and facilitates pyroptosome formation. Regulates endocytosis and cell migration in neutrophils.</text>
</comment>
<comment type="subunit">
    <text evidence="7 8 9 10 11 12 22">Homodimer (PubMed:19584923). Homotrimer (PubMed:17964261). Interacts (via coiled-coil domain) with CD2AP, PTPN12 and PTPN18. Interacts (via SH3 domain) with ABL1 and WAS. Interacts (via SH3 and coiled-coil domains) with MEFV (via B-box zinc finger); the interaction allows binding of MEFV to PYCARD and facilitates formation of PYCARD pyroptosomes. Interacts with CD2, DNM2 and FASLG.</text>
</comment>
<comment type="interaction">
    <interactant intactId="EBI-1050964">
        <id>O43586</id>
    </interactant>
    <interactant intactId="EBI-710484">
        <id>O15169</id>
        <label>AXIN1</label>
    </interactant>
    <organismsDiffer>false</organismsDiffer>
    <experiments>3</experiments>
</comment>
<comment type="interaction">
    <interactant intactId="EBI-1050964">
        <id>O43586</id>
    </interactant>
    <interactant intactId="EBI-1050987">
        <id>O43684</id>
        <label>BUB3</label>
    </interactant>
    <organismsDiffer>false</organismsDiffer>
    <experiments>3</experiments>
</comment>
<comment type="interaction">
    <interactant intactId="EBI-1050964">
        <id>O43586</id>
    </interactant>
    <interactant intactId="EBI-5453285">
        <id>Q2TBE0</id>
        <label>CWF19L2</label>
    </interactant>
    <organismsDiffer>false</organismsDiffer>
    <experiments>3</experiments>
</comment>
<comment type="interaction">
    <interactant intactId="EBI-1050964">
        <id>O43586</id>
    </interactant>
    <interactant intactId="EBI-2514301">
        <id>Q8IX18</id>
        <label>DHX40</label>
    </interactant>
    <organismsDiffer>false</organismsDiffer>
    <experiments>3</experiments>
</comment>
<comment type="interaction">
    <interactant intactId="EBI-1050964">
        <id>O43586</id>
    </interactant>
    <interactant intactId="EBI-2339219">
        <id>Q08426</id>
        <label>EHHADH</label>
    </interactant>
    <organismsDiffer>false</organismsDiffer>
    <experiments>3</experiments>
</comment>
<comment type="interaction">
    <interactant intactId="EBI-1050964">
        <id>O43586</id>
    </interactant>
    <interactant intactId="EBI-6658203">
        <id>Q86YD7</id>
        <label>FAM90A1</label>
    </interactant>
    <organismsDiffer>false</organismsDiffer>
    <experiments>6</experiments>
</comment>
<comment type="interaction">
    <interactant intactId="EBI-1050964">
        <id>O43586</id>
    </interactant>
    <interactant intactId="EBI-495538">
        <id>P48023</id>
        <label>FASLG</label>
    </interactant>
    <organismsDiffer>false</organismsDiffer>
    <experiments>5</experiments>
</comment>
<comment type="interaction">
    <interactant intactId="EBI-1050964">
        <id>O43586</id>
    </interactant>
    <interactant intactId="EBI-744419">
        <id>Q96D16</id>
        <label>FBXL18</label>
    </interactant>
    <organismsDiffer>false</organismsDiffer>
    <experiments>3</experiments>
</comment>
<comment type="interaction">
    <interactant intactId="EBI-1050964">
        <id>O43586</id>
    </interactant>
    <interactant intactId="EBI-11956675">
        <id>Q9GZV7</id>
        <label>HAPLN2</label>
    </interactant>
    <organismsDiffer>false</organismsDiffer>
    <experiments>3</experiments>
</comment>
<comment type="interaction">
    <interactant intactId="EBI-1050964">
        <id>O43586</id>
    </interactant>
    <interactant intactId="EBI-747421">
        <id>Q03014</id>
        <label>HHEX</label>
    </interactant>
    <organismsDiffer>false</organismsDiffer>
    <experiments>3</experiments>
</comment>
<comment type="interaction">
    <interactant intactId="EBI-1050964">
        <id>O43586</id>
    </interactant>
    <interactant intactId="EBI-7116203">
        <id>O75031</id>
        <label>HSF2BP</label>
    </interactant>
    <organismsDiffer>false</organismsDiffer>
    <experiments>3</experiments>
</comment>
<comment type="interaction">
    <interactant intactId="EBI-1050964">
        <id>O43586</id>
    </interactant>
    <interactant intactId="EBI-17178971">
        <id>Q14005-2</id>
        <label>IL16</label>
    </interactant>
    <organismsDiffer>false</organismsDiffer>
    <experiments>3</experiments>
</comment>
<comment type="interaction">
    <interactant intactId="EBI-1050964">
        <id>O43586</id>
    </interactant>
    <interactant intactId="EBI-2556193">
        <id>Q63ZY3</id>
        <label>KANK2</label>
    </interactant>
    <organismsDiffer>false</organismsDiffer>
    <experiments>3</experiments>
</comment>
<comment type="interaction">
    <interactant intactId="EBI-1050964">
        <id>O43586</id>
    </interactant>
    <interactant intactId="EBI-748884">
        <id>Q96GY3</id>
        <label>LIN37</label>
    </interactant>
    <organismsDiffer>false</organismsDiffer>
    <experiments>3</experiments>
</comment>
<comment type="interaction">
    <interactant intactId="EBI-1050964">
        <id>O43586</id>
    </interactant>
    <interactant intactId="EBI-372521">
        <id>Q9Y4Z0</id>
        <label>LSM4</label>
    </interactant>
    <organismsDiffer>false</organismsDiffer>
    <experiments>6</experiments>
</comment>
<comment type="interaction">
    <interactant intactId="EBI-1050964">
        <id>O43586</id>
    </interactant>
    <interactant intactId="EBI-348259">
        <id>Q96EZ8</id>
        <label>MCRS1</label>
    </interactant>
    <organismsDiffer>false</organismsDiffer>
    <experiments>3</experiments>
</comment>
<comment type="interaction">
    <interactant intactId="EBI-1050964">
        <id>O43586</id>
    </interactant>
    <interactant intactId="EBI-7644532">
        <id>O15553</id>
        <label>MEFV</label>
    </interactant>
    <organismsDiffer>false</organismsDiffer>
    <experiments>4</experiments>
</comment>
<comment type="interaction">
    <interactant intactId="EBI-1050964">
        <id>O43586</id>
    </interactant>
    <interactant intactId="EBI-1757866">
        <id>P00540</id>
        <label>MOS</label>
    </interactant>
    <organismsDiffer>false</organismsDiffer>
    <experiments>3</experiments>
</comment>
<comment type="interaction">
    <interactant intactId="EBI-1050964">
        <id>O43586</id>
    </interactant>
    <interactant intactId="EBI-464743">
        <id>Q09161</id>
        <label>NCBP1</label>
    </interactant>
    <organismsDiffer>false</organismsDiffer>
    <experiments>3</experiments>
</comment>
<comment type="interaction">
    <interactant intactId="EBI-1050964">
        <id>O43586</id>
    </interactant>
    <interactant intactId="EBI-10329013">
        <id>Q9Y5E9</id>
        <label>PCDHB14</label>
    </interactant>
    <organismsDiffer>false</organismsDiffer>
    <experiments>6</experiments>
</comment>
<comment type="interaction">
    <interactant intactId="EBI-1050964">
        <id>O43586</id>
    </interactant>
    <interactant intactId="EBI-1045072">
        <id>Q96T60</id>
        <label>PNKP</label>
    </interactant>
    <organismsDiffer>false</organismsDiffer>
    <experiments>3</experiments>
</comment>
<comment type="interaction">
    <interactant intactId="EBI-1050964">
        <id>O43586</id>
    </interactant>
    <interactant intactId="EBI-1567797">
        <id>Q8WWY3</id>
        <label>PRPF31</label>
    </interactant>
    <organismsDiffer>false</organismsDiffer>
    <experiments>9</experiments>
</comment>
<comment type="interaction">
    <interactant intactId="EBI-1050964">
        <id>O43586</id>
    </interactant>
    <interactant intactId="EBI-11986293">
        <id>P0CG20</id>
        <label>PRR35</label>
    </interactant>
    <organismsDiffer>false</organismsDiffer>
    <experiments>3</experiments>
</comment>
<comment type="interaction">
    <interactant intactId="EBI-1050964">
        <id>O43586</id>
    </interactant>
    <interactant intactId="EBI-1050964">
        <id>O43586</id>
        <label>PSTPIP1</label>
    </interactant>
    <organismsDiffer>false</organismsDiffer>
    <experiments>10</experiments>
</comment>
<comment type="interaction">
    <interactant intactId="EBI-1050964">
        <id>O43586</id>
    </interactant>
    <interactant intactId="EBI-2266035">
        <id>Q05209</id>
        <label>PTPN12</label>
    </interactant>
    <organismsDiffer>false</organismsDiffer>
    <experiments>6</experiments>
</comment>
<comment type="interaction">
    <interactant intactId="EBI-1050964">
        <id>O43586</id>
    </interactant>
    <interactant intactId="EBI-1384210">
        <id>Q99952</id>
        <label>PTPN18</label>
    </interactant>
    <organismsDiffer>false</organismsDiffer>
    <experiments>5</experiments>
</comment>
<comment type="interaction">
    <interactant intactId="EBI-1050964">
        <id>O43586</id>
    </interactant>
    <interactant intactId="EBI-1211241">
        <id>Q9Y2R2</id>
        <label>PTPN22</label>
    </interactant>
    <organismsDiffer>false</organismsDiffer>
    <experiments>6</experiments>
</comment>
<comment type="interaction">
    <interactant intactId="EBI-1050964">
        <id>O43586</id>
    </interactant>
    <interactant intactId="EBI-6955492">
        <id>Q9Y2R2-1</id>
        <label>PTPN22</label>
    </interactant>
    <organismsDiffer>false</organismsDiffer>
    <experiments>9</experiments>
</comment>
<comment type="interaction">
    <interactant intactId="EBI-1050964">
        <id>O43586</id>
    </interactant>
    <interactant intactId="EBI-395959">
        <id>Q15287</id>
        <label>RNPS1</label>
    </interactant>
    <organismsDiffer>false</organismsDiffer>
    <experiments>3</experiments>
</comment>
<comment type="interaction">
    <interactant intactId="EBI-1050964">
        <id>O43586</id>
    </interactant>
    <interactant intactId="EBI-358122">
        <id>P32969</id>
        <label>RPL9P9</label>
    </interactant>
    <organismsDiffer>false</organismsDiffer>
    <experiments>3</experiments>
</comment>
<comment type="interaction">
    <interactant intactId="EBI-1050964">
        <id>O43586</id>
    </interactant>
    <interactant intactId="EBI-10217913">
        <id>Q14D33</id>
        <label>RTP5</label>
    </interactant>
    <organismsDiffer>false</organismsDiffer>
    <experiments>6</experiments>
</comment>
<comment type="interaction">
    <interactant intactId="EBI-1050964">
        <id>O43586</id>
    </interactant>
    <interactant intactId="EBI-16429492">
        <id>P28702-3</id>
        <label>RXRB</label>
    </interactant>
    <organismsDiffer>false</organismsDiffer>
    <experiments>3</experiments>
</comment>
<comment type="interaction">
    <interactant intactId="EBI-1050964">
        <id>O43586</id>
    </interactant>
    <interactant intactId="EBI-748391">
        <id>Q9BWG6</id>
        <label>SCNM1</label>
    </interactant>
    <organismsDiffer>false</organismsDiffer>
    <experiments>3</experiments>
</comment>
<comment type="interaction">
    <interactant intactId="EBI-1050964">
        <id>O43586</id>
    </interactant>
    <interactant intactId="EBI-727004">
        <id>O00560</id>
        <label>SDCBP</label>
    </interactant>
    <organismsDiffer>false</organismsDiffer>
    <experiments>3</experiments>
</comment>
<comment type="interaction">
    <interactant intactId="EBI-1050964">
        <id>O43586</id>
    </interactant>
    <interactant intactId="EBI-747035">
        <id>Q9H788</id>
        <label>SH2D4A</label>
    </interactant>
    <organismsDiffer>false</organismsDiffer>
    <experiments>3</experiments>
</comment>
<comment type="interaction">
    <interactant intactId="EBI-1050964">
        <id>O43586</id>
    </interactant>
    <interactant intactId="EBI-358489">
        <id>Q96GM5</id>
        <label>SMARCD1</label>
    </interactant>
    <organismsDiffer>false</organismsDiffer>
    <experiments>3</experiments>
</comment>
<comment type="interaction">
    <interactant intactId="EBI-1050964">
        <id>O43586</id>
    </interactant>
    <interactant intactId="EBI-717201">
        <id>Q9UQ90</id>
        <label>SPG7</label>
    </interactant>
    <organismsDiffer>false</organismsDiffer>
    <experiments>3</experiments>
</comment>
<comment type="interaction">
    <interactant intactId="EBI-1050964">
        <id>O43586</id>
    </interactant>
    <interactant intactId="EBI-3956833">
        <id>P17752</id>
        <label>TPH1</label>
    </interactant>
    <organismsDiffer>false</organismsDiffer>
    <experiments>3</experiments>
</comment>
<comment type="interaction">
    <interactant intactId="EBI-1050964">
        <id>O43586</id>
    </interactant>
    <interactant intactId="EBI-765817">
        <id>Q9Y228</id>
        <label>TRAF3IP3</label>
    </interactant>
    <organismsDiffer>false</organismsDiffer>
    <experiments>3</experiments>
</comment>
<comment type="interaction">
    <interactant intactId="EBI-1050964">
        <id>O43586</id>
    </interactant>
    <interactant intactId="EBI-10241197">
        <id>Q3SY00</id>
        <label>TSGA10IP</label>
    </interactant>
    <organismsDiffer>false</organismsDiffer>
    <experiments>3</experiments>
</comment>
<comment type="interaction">
    <interactant intactId="EBI-1050964">
        <id>O43586</id>
    </interactant>
    <interactant intactId="EBI-5357290">
        <id>O75386</id>
        <label>TULP3</label>
    </interactant>
    <organismsDiffer>false</organismsDiffer>
    <experiments>6</experiments>
</comment>
<comment type="interaction">
    <interactant intactId="EBI-1050964">
        <id>O43586</id>
    </interactant>
    <interactant intactId="EBI-716589">
        <id>Q96B02</id>
        <label>UBE2W</label>
    </interactant>
    <organismsDiffer>false</organismsDiffer>
    <experiments>4</experiments>
</comment>
<comment type="interaction">
    <interactant intactId="EBI-1050964">
        <id>O43586</id>
    </interactant>
    <interactant intactId="EBI-14104088">
        <id>Q53FD0-2</id>
        <label>ZC2HC1C</label>
    </interactant>
    <organismsDiffer>false</organismsDiffer>
    <experiments>3</experiments>
</comment>
<comment type="interaction">
    <interactant intactId="EBI-1050964">
        <id>O43586</id>
    </interactant>
    <interactant intactId="EBI-3438881">
        <id>Q9Y473</id>
        <label>ZNF175</label>
    </interactant>
    <organismsDiffer>false</organismsDiffer>
    <experiments>3</experiments>
</comment>
<comment type="interaction">
    <interactant intactId="EBI-1050964">
        <id>O43586</id>
    </interactant>
    <interactant intactId="EBI-347633">
        <id>Q9H9D4</id>
        <label>ZNF408</label>
    </interactant>
    <organismsDiffer>false</organismsDiffer>
    <experiments>3</experiments>
</comment>
<comment type="interaction">
    <interactant intactId="EBI-1050964">
        <id>O43586</id>
    </interactant>
    <interactant intactId="EBI-746277">
        <id>Q9UK33</id>
        <label>ZNF580</label>
    </interactant>
    <organismsDiffer>false</organismsDiffer>
    <experiments>3</experiments>
</comment>
<comment type="interaction">
    <interactant intactId="EBI-1050964">
        <id>O43586</id>
    </interactant>
    <interactant intactId="EBI-16429014">
        <id>A0A0S2Z5X4</id>
        <label>ZNF688</label>
    </interactant>
    <organismsDiffer>false</organismsDiffer>
    <experiments>3</experiments>
</comment>
<comment type="subcellular location">
    <subcellularLocation>
        <location evidence="22">Cytoplasm</location>
    </subcellularLocation>
    <subcellularLocation>
        <location evidence="9 22">Cell membrane</location>
        <topology evidence="22">Peripheral membrane protein</topology>
    </subcellularLocation>
    <subcellularLocation>
        <location evidence="9">Cell projection</location>
        <location evidence="9">Uropodium</location>
    </subcellularLocation>
    <subcellularLocation>
        <location evidence="10 11">Cytoplasm</location>
        <location evidence="10 11">Cytoskeleton</location>
    </subcellularLocation>
    <subcellularLocation>
        <location evidence="2">Cytoplasm</location>
        <location evidence="2">Perinuclear region</location>
    </subcellularLocation>
    <subcellularLocation>
        <location evidence="2">Cell projection</location>
        <location evidence="2">Lamellipodium</location>
    </subcellularLocation>
    <subcellularLocation>
        <location evidence="2">Cleavage furrow</location>
    </subcellularLocation>
    <text evidence="2 9 11 22">Mainly cytoplasmic in T-cells (PubMed:9857189). Colocalizes in cluster with CD2 near the cell surface membrane in activated T-cells (PubMed:9857189). In monocytes, forms a branched filamentous network in the cytoplasm (PubMed:19584923). In transfected cells, forms relatively straight filaments radiating out from the nucleus (PubMed:19584923). Filament formation requires an intact tubulin cytoskeleton (PubMed:19584923). In migrating neutrophils, colocalizes with PIP5K1C and DNM2 to the trailing edge of the uropod in a actin-dependent manner (PubMed:18480402). Colocalized with PTPN12 in the cytoplasm and the perinuclear region. During interphase, colocalizes with F-actin in the cortical cytoskeleton, lamellipodia, and stress fibers. In dividing cells, colocalizes with the F-actin rich cytokinetic cleavage furrow. Colocalized with CD2AP and WAS in the actin cytoskeleton within the cytoplasm. Colocalized with CD2, CD2AP and WAS at the site of T-cell:APC contact (By similarity).</text>
</comment>
<comment type="alternative products">
    <event type="alternative splicing"/>
    <isoform>
        <id>O43586-1</id>
        <name>1</name>
        <name>CD2BP1L</name>
        <sequence type="displayed"/>
    </isoform>
    <isoform>
        <id>O43586-2</id>
        <name>2</name>
        <name>CD2BP1S</name>
        <sequence type="described" ref="VSP_015627"/>
    </isoform>
</comment>
<comment type="tissue specificity">
    <text evidence="7 22">Highly expressed in the peripheral blood leukocytes, granulocytes and monocytes, namely in T-cells and natural killer cells, and in spleen. Weakly expressed in the thymus, small intestine, lung and placenta.</text>
</comment>
<comment type="domain">
    <text>The F-BAR domain is important for filament formation. The SH3 domain is not required for filament formation or localization to the uropod.</text>
</comment>
<comment type="PTM">
    <text evidence="1">Dephosphorylated on Tyr-345 by PTPN18, this event negatively regulates the association of PSTPIP1 with SH2 domain-containing proteins as tyrosine kinase. Phosphorylation of Tyr-345 is probably required for subsequent phosphorylation at other tyrosine residues. Phosphorylation is induced by activation of the EGFR and PDGFR in a ABL1 dependent manner. The phosphorylation regulates the interaction with WAS and with MEFV (By similarity).</text>
</comment>
<comment type="disease" evidence="6 7 13 15 20">
    <disease id="DI-02127">
        <name>Pyogenic sterile arthritis, pyoderma gangrenosum, and acne</name>
        <acronym>PAPA</acronym>
        <description>A rare autosomal dominant autoinflammatory disease that typically presents with recurrent sterile, erosive arthritis in childhood, occurring spontaneously or after minor trauma, occasionally resulting in significant joint destruction. By puberty, joint symptoms tend to subside and cutaneous symptoms increase. Cutaneous manifestations include pathergy, frequently with abscesses at the sites of injections, severe cystic acne, and recurrent nonhealing sterile ulcers, often diagnosed as pyoderma gangrenosum.</description>
        <dbReference type="MIM" id="604416"/>
    </disease>
    <text>The disease is caused by variants affecting the gene represented in this entry.</text>
</comment>
<comment type="disease" evidence="13 14 16 17 18 19 21">
    <disease id="DI-06951">
        <name>Autoinflammatory syndrome with cytopenia, hyperzincemia, and hypercalprotectinemia</name>
        <acronym>AICZC</acronym>
        <description>An autosomal dominant, autoinflammatory disorder characterized by severe systemic and cutaneous inflammation, hepatosplenomegaly, arthritis, pancytopenia, failure to thrive, and marked elevation of zinc and calprotectin blood levels. AICZC shows intrafamilial variable expressivity and incomplete penetrance.</description>
        <dbReference type="MIM" id="601979"/>
    </disease>
    <text>The disease is caused by variants affecting the gene represented in this entry.</text>
</comment>
<comment type="online information" name="INFEVERS">
    <link uri="https://infevers.umai-montpellier.fr/web/search.php?n=5"/>
    <text>Repertory of FMF and hereditary autoinflammatory disorders mutations</text>
</comment>
<name>PPIP1_HUMAN</name>